<evidence type="ECO:0000250" key="1"/>
<evidence type="ECO:0000255" key="2">
    <source>
        <dbReference type="HAMAP-Rule" id="MF_00741"/>
    </source>
</evidence>
<feature type="initiator methionine" description="Removed" evidence="1">
    <location>
        <position position="1"/>
    </location>
</feature>
<feature type="chain" id="PRO_0000148241" description="Phosphoribosylformylglycinamidine cyclo-ligase">
    <location>
        <begin position="2"/>
        <end position="345"/>
    </location>
</feature>
<protein>
    <recommendedName>
        <fullName evidence="2">Phosphoribosylformylglycinamidine cyclo-ligase</fullName>
        <ecNumber evidence="2">6.3.3.1</ecNumber>
    </recommendedName>
    <alternativeName>
        <fullName evidence="2">AIR synthase</fullName>
    </alternativeName>
    <alternativeName>
        <fullName evidence="2">AIRS</fullName>
    </alternativeName>
    <alternativeName>
        <fullName evidence="2">Phosphoribosyl-aminoimidazole synthetase</fullName>
    </alternativeName>
</protein>
<reference key="1">
    <citation type="journal article" date="2001" name="Nature">
        <title>Complete genome sequence of a multiple drug resistant Salmonella enterica serovar Typhi CT18.</title>
        <authorList>
            <person name="Parkhill J."/>
            <person name="Dougan G."/>
            <person name="James K.D."/>
            <person name="Thomson N.R."/>
            <person name="Pickard D."/>
            <person name="Wain J."/>
            <person name="Churcher C.M."/>
            <person name="Mungall K.L."/>
            <person name="Bentley S.D."/>
            <person name="Holden M.T.G."/>
            <person name="Sebaihia M."/>
            <person name="Baker S."/>
            <person name="Basham D."/>
            <person name="Brooks K."/>
            <person name="Chillingworth T."/>
            <person name="Connerton P."/>
            <person name="Cronin A."/>
            <person name="Davis P."/>
            <person name="Davies R.M."/>
            <person name="Dowd L."/>
            <person name="White N."/>
            <person name="Farrar J."/>
            <person name="Feltwell T."/>
            <person name="Hamlin N."/>
            <person name="Haque A."/>
            <person name="Hien T.T."/>
            <person name="Holroyd S."/>
            <person name="Jagels K."/>
            <person name="Krogh A."/>
            <person name="Larsen T.S."/>
            <person name="Leather S."/>
            <person name="Moule S."/>
            <person name="O'Gaora P."/>
            <person name="Parry C."/>
            <person name="Quail M.A."/>
            <person name="Rutherford K.M."/>
            <person name="Simmonds M."/>
            <person name="Skelton J."/>
            <person name="Stevens K."/>
            <person name="Whitehead S."/>
            <person name="Barrell B.G."/>
        </authorList>
    </citation>
    <scope>NUCLEOTIDE SEQUENCE [LARGE SCALE GENOMIC DNA]</scope>
    <source>
        <strain>CT18</strain>
    </source>
</reference>
<reference key="2">
    <citation type="journal article" date="2003" name="J. Bacteriol.">
        <title>Comparative genomics of Salmonella enterica serovar Typhi strains Ty2 and CT18.</title>
        <authorList>
            <person name="Deng W."/>
            <person name="Liou S.-R."/>
            <person name="Plunkett G. III"/>
            <person name="Mayhew G.F."/>
            <person name="Rose D.J."/>
            <person name="Burland V."/>
            <person name="Kodoyianni V."/>
            <person name="Schwartz D.C."/>
            <person name="Blattner F.R."/>
        </authorList>
    </citation>
    <scope>NUCLEOTIDE SEQUENCE [LARGE SCALE GENOMIC DNA]</scope>
    <source>
        <strain>ATCC 700931 / Ty2</strain>
    </source>
</reference>
<accession>Q8Z4R2</accession>
<organism>
    <name type="scientific">Salmonella typhi</name>
    <dbReference type="NCBI Taxonomy" id="90370"/>
    <lineage>
        <taxon>Bacteria</taxon>
        <taxon>Pseudomonadati</taxon>
        <taxon>Pseudomonadota</taxon>
        <taxon>Gammaproteobacteria</taxon>
        <taxon>Enterobacterales</taxon>
        <taxon>Enterobacteriaceae</taxon>
        <taxon>Salmonella</taxon>
    </lineage>
</organism>
<name>PUR5_SALTI</name>
<dbReference type="EC" id="6.3.3.1" evidence="2"/>
<dbReference type="EMBL" id="AL513382">
    <property type="protein sequence ID" value="CAD02701.1"/>
    <property type="molecule type" value="Genomic_DNA"/>
</dbReference>
<dbReference type="EMBL" id="AE014613">
    <property type="protein sequence ID" value="AAO68077.1"/>
    <property type="molecule type" value="Genomic_DNA"/>
</dbReference>
<dbReference type="RefSeq" id="NP_457034.1">
    <property type="nucleotide sequence ID" value="NC_003198.1"/>
</dbReference>
<dbReference type="RefSeq" id="WP_001767330.1">
    <property type="nucleotide sequence ID" value="NZ_WSUR01000007.1"/>
</dbReference>
<dbReference type="SMR" id="Q8Z4R2"/>
<dbReference type="STRING" id="220341.gene:17586635"/>
<dbReference type="KEGG" id="stt:t0358"/>
<dbReference type="KEGG" id="sty:STY2740"/>
<dbReference type="PATRIC" id="fig|220341.7.peg.2778"/>
<dbReference type="eggNOG" id="COG0150">
    <property type="taxonomic scope" value="Bacteria"/>
</dbReference>
<dbReference type="HOGENOM" id="CLU_047116_0_0_6"/>
<dbReference type="OMA" id="MTDYICV"/>
<dbReference type="OrthoDB" id="9777881at2"/>
<dbReference type="UniPathway" id="UPA00074">
    <property type="reaction ID" value="UER00129"/>
</dbReference>
<dbReference type="Proteomes" id="UP000000541">
    <property type="component" value="Chromosome"/>
</dbReference>
<dbReference type="Proteomes" id="UP000002670">
    <property type="component" value="Chromosome"/>
</dbReference>
<dbReference type="GO" id="GO:0005829">
    <property type="term" value="C:cytosol"/>
    <property type="evidence" value="ECO:0007669"/>
    <property type="project" value="TreeGrafter"/>
</dbReference>
<dbReference type="GO" id="GO:0005524">
    <property type="term" value="F:ATP binding"/>
    <property type="evidence" value="ECO:0007669"/>
    <property type="project" value="UniProtKB-KW"/>
</dbReference>
<dbReference type="GO" id="GO:0004637">
    <property type="term" value="F:phosphoribosylamine-glycine ligase activity"/>
    <property type="evidence" value="ECO:0007669"/>
    <property type="project" value="TreeGrafter"/>
</dbReference>
<dbReference type="GO" id="GO:0004641">
    <property type="term" value="F:phosphoribosylformylglycinamidine cyclo-ligase activity"/>
    <property type="evidence" value="ECO:0007669"/>
    <property type="project" value="UniProtKB-UniRule"/>
</dbReference>
<dbReference type="GO" id="GO:0006189">
    <property type="term" value="P:'de novo' IMP biosynthetic process"/>
    <property type="evidence" value="ECO:0007669"/>
    <property type="project" value="UniProtKB-UniRule"/>
</dbReference>
<dbReference type="GO" id="GO:0046084">
    <property type="term" value="P:adenine biosynthetic process"/>
    <property type="evidence" value="ECO:0007669"/>
    <property type="project" value="TreeGrafter"/>
</dbReference>
<dbReference type="CDD" id="cd02196">
    <property type="entry name" value="PurM"/>
    <property type="match status" value="1"/>
</dbReference>
<dbReference type="FunFam" id="3.30.1330.10:FF:000001">
    <property type="entry name" value="Phosphoribosylformylglycinamidine cyclo-ligase"/>
    <property type="match status" value="1"/>
</dbReference>
<dbReference type="FunFam" id="3.90.650.10:FF:000001">
    <property type="entry name" value="Phosphoribosylformylglycinamidine cyclo-ligase"/>
    <property type="match status" value="1"/>
</dbReference>
<dbReference type="Gene3D" id="3.90.650.10">
    <property type="entry name" value="PurM-like C-terminal domain"/>
    <property type="match status" value="1"/>
</dbReference>
<dbReference type="Gene3D" id="3.30.1330.10">
    <property type="entry name" value="PurM-like, N-terminal domain"/>
    <property type="match status" value="1"/>
</dbReference>
<dbReference type="HAMAP" id="MF_00741">
    <property type="entry name" value="AIRS"/>
    <property type="match status" value="1"/>
</dbReference>
<dbReference type="InterPro" id="IPR010918">
    <property type="entry name" value="PurM-like_C_dom"/>
</dbReference>
<dbReference type="InterPro" id="IPR036676">
    <property type="entry name" value="PurM-like_C_sf"/>
</dbReference>
<dbReference type="InterPro" id="IPR016188">
    <property type="entry name" value="PurM-like_N"/>
</dbReference>
<dbReference type="InterPro" id="IPR036921">
    <property type="entry name" value="PurM-like_N_sf"/>
</dbReference>
<dbReference type="InterPro" id="IPR004733">
    <property type="entry name" value="PurM_cligase"/>
</dbReference>
<dbReference type="NCBIfam" id="TIGR00878">
    <property type="entry name" value="purM"/>
    <property type="match status" value="1"/>
</dbReference>
<dbReference type="PANTHER" id="PTHR10520:SF12">
    <property type="entry name" value="TRIFUNCTIONAL PURINE BIOSYNTHETIC PROTEIN ADENOSINE-3"/>
    <property type="match status" value="1"/>
</dbReference>
<dbReference type="PANTHER" id="PTHR10520">
    <property type="entry name" value="TRIFUNCTIONAL PURINE BIOSYNTHETIC PROTEIN ADENOSINE-3-RELATED"/>
    <property type="match status" value="1"/>
</dbReference>
<dbReference type="Pfam" id="PF00586">
    <property type="entry name" value="AIRS"/>
    <property type="match status" value="1"/>
</dbReference>
<dbReference type="Pfam" id="PF02769">
    <property type="entry name" value="AIRS_C"/>
    <property type="match status" value="1"/>
</dbReference>
<dbReference type="SUPFAM" id="SSF56042">
    <property type="entry name" value="PurM C-terminal domain-like"/>
    <property type="match status" value="1"/>
</dbReference>
<dbReference type="SUPFAM" id="SSF55326">
    <property type="entry name" value="PurM N-terminal domain-like"/>
    <property type="match status" value="1"/>
</dbReference>
<sequence>MTDKTSLSYKDAGVDIDAGNALVDRIKGVVKKTRRSEVMGGLGGFGALCALPQKYREPVLVSGTDGVGTKLRLAMDLKRHDAIGIDLVAMCVNDLVVQGAEPLFFLDYYATGKLDVDTAASVINGIAEGCLQSGCALVGGETAEMPGMYHGEDYDVAGFCVGVVEKSEIIDGSRVAEGDVLIALGSSGPHSNGYSLVRKIIDVSGCDPQTTLLEGKPLADHLLEPTRIYVKSVLELIENIDVHAIAHLTGGGFWENIPRVLPENTQAVINESSWQWPAIFTWLRTAGNVSRHEMYRAFNCGVGMVIALSAPEADKALALLNEKGENAWKIGIIKASDSEQRVVIE</sequence>
<gene>
    <name evidence="2" type="primary">purM</name>
    <name type="ordered locus">STY2740</name>
    <name type="ordered locus">t0358</name>
</gene>
<comment type="catalytic activity">
    <reaction evidence="2">
        <text>2-formamido-N(1)-(5-O-phospho-beta-D-ribosyl)acetamidine + ATP = 5-amino-1-(5-phospho-beta-D-ribosyl)imidazole + ADP + phosphate + H(+)</text>
        <dbReference type="Rhea" id="RHEA:23032"/>
        <dbReference type="ChEBI" id="CHEBI:15378"/>
        <dbReference type="ChEBI" id="CHEBI:30616"/>
        <dbReference type="ChEBI" id="CHEBI:43474"/>
        <dbReference type="ChEBI" id="CHEBI:137981"/>
        <dbReference type="ChEBI" id="CHEBI:147287"/>
        <dbReference type="ChEBI" id="CHEBI:456216"/>
        <dbReference type="EC" id="6.3.3.1"/>
    </reaction>
</comment>
<comment type="pathway">
    <text evidence="2">Purine metabolism; IMP biosynthesis via de novo pathway; 5-amino-1-(5-phospho-D-ribosyl)imidazole from N(2)-formyl-N(1)-(5-phospho-D-ribosyl)glycinamide: step 2/2.</text>
</comment>
<comment type="subcellular location">
    <subcellularLocation>
        <location evidence="2">Cytoplasm</location>
    </subcellularLocation>
</comment>
<comment type="similarity">
    <text evidence="2">Belongs to the AIR synthase family.</text>
</comment>
<proteinExistence type="inferred from homology"/>
<keyword id="KW-0067">ATP-binding</keyword>
<keyword id="KW-0963">Cytoplasm</keyword>
<keyword id="KW-0436">Ligase</keyword>
<keyword id="KW-0547">Nucleotide-binding</keyword>
<keyword id="KW-0658">Purine biosynthesis</keyword>